<reference key="1">
    <citation type="journal article" date="2004" name="PLoS Biol.">
        <title>Genomic insights into methanotrophy: the complete genome sequence of Methylococcus capsulatus (Bath).</title>
        <authorList>
            <person name="Ward N.L."/>
            <person name="Larsen O."/>
            <person name="Sakwa J."/>
            <person name="Bruseth L."/>
            <person name="Khouri H.M."/>
            <person name="Durkin A.S."/>
            <person name="Dimitrov G."/>
            <person name="Jiang L."/>
            <person name="Scanlan D."/>
            <person name="Kang K.H."/>
            <person name="Lewis M.R."/>
            <person name="Nelson K.E."/>
            <person name="Methe B.A."/>
            <person name="Wu M."/>
            <person name="Heidelberg J.F."/>
            <person name="Paulsen I.T."/>
            <person name="Fouts D.E."/>
            <person name="Ravel J."/>
            <person name="Tettelin H."/>
            <person name="Ren Q."/>
            <person name="Read T.D."/>
            <person name="DeBoy R.T."/>
            <person name="Seshadri R."/>
            <person name="Salzberg S.L."/>
            <person name="Jensen H.B."/>
            <person name="Birkeland N.K."/>
            <person name="Nelson W.C."/>
            <person name="Dodson R.J."/>
            <person name="Grindhaug S.H."/>
            <person name="Holt I.E."/>
            <person name="Eidhammer I."/>
            <person name="Jonasen I."/>
            <person name="Vanaken S."/>
            <person name="Utterback T.R."/>
            <person name="Feldblyum T.V."/>
            <person name="Fraser C.M."/>
            <person name="Lillehaug J.R."/>
            <person name="Eisen J.A."/>
        </authorList>
    </citation>
    <scope>NUCLEOTIDE SEQUENCE [LARGE SCALE GENOMIC DNA]</scope>
    <source>
        <strain>ATCC 33009 / NCIMB 11132 / Bath</strain>
    </source>
</reference>
<evidence type="ECO:0000255" key="1">
    <source>
        <dbReference type="HAMAP-Rule" id="MF_00011"/>
    </source>
</evidence>
<feature type="chain" id="PRO_0000224293" description="Adenylosuccinate synthetase">
    <location>
        <begin position="1"/>
        <end position="432"/>
    </location>
</feature>
<feature type="active site" description="Proton acceptor" evidence="1">
    <location>
        <position position="14"/>
    </location>
</feature>
<feature type="active site" description="Proton donor" evidence="1">
    <location>
        <position position="42"/>
    </location>
</feature>
<feature type="binding site" evidence="1">
    <location>
        <begin position="13"/>
        <end position="19"/>
    </location>
    <ligand>
        <name>GTP</name>
        <dbReference type="ChEBI" id="CHEBI:37565"/>
    </ligand>
</feature>
<feature type="binding site" description="in other chain" evidence="1">
    <location>
        <begin position="14"/>
        <end position="17"/>
    </location>
    <ligand>
        <name>IMP</name>
        <dbReference type="ChEBI" id="CHEBI:58053"/>
        <note>ligand shared between dimeric partners</note>
    </ligand>
</feature>
<feature type="binding site" evidence="1">
    <location>
        <position position="14"/>
    </location>
    <ligand>
        <name>Mg(2+)</name>
        <dbReference type="ChEBI" id="CHEBI:18420"/>
    </ligand>
</feature>
<feature type="binding site" description="in other chain" evidence="1">
    <location>
        <begin position="39"/>
        <end position="42"/>
    </location>
    <ligand>
        <name>IMP</name>
        <dbReference type="ChEBI" id="CHEBI:58053"/>
        <note>ligand shared between dimeric partners</note>
    </ligand>
</feature>
<feature type="binding site" evidence="1">
    <location>
        <begin position="41"/>
        <end position="43"/>
    </location>
    <ligand>
        <name>GTP</name>
        <dbReference type="ChEBI" id="CHEBI:37565"/>
    </ligand>
</feature>
<feature type="binding site" evidence="1">
    <location>
        <position position="41"/>
    </location>
    <ligand>
        <name>Mg(2+)</name>
        <dbReference type="ChEBI" id="CHEBI:18420"/>
    </ligand>
</feature>
<feature type="binding site" description="in other chain" evidence="1">
    <location>
        <position position="130"/>
    </location>
    <ligand>
        <name>IMP</name>
        <dbReference type="ChEBI" id="CHEBI:58053"/>
        <note>ligand shared between dimeric partners</note>
    </ligand>
</feature>
<feature type="binding site" evidence="1">
    <location>
        <position position="144"/>
    </location>
    <ligand>
        <name>IMP</name>
        <dbReference type="ChEBI" id="CHEBI:58053"/>
        <note>ligand shared between dimeric partners</note>
    </ligand>
</feature>
<feature type="binding site" description="in other chain" evidence="1">
    <location>
        <position position="225"/>
    </location>
    <ligand>
        <name>IMP</name>
        <dbReference type="ChEBI" id="CHEBI:58053"/>
        <note>ligand shared between dimeric partners</note>
    </ligand>
</feature>
<feature type="binding site" description="in other chain" evidence="1">
    <location>
        <position position="240"/>
    </location>
    <ligand>
        <name>IMP</name>
        <dbReference type="ChEBI" id="CHEBI:58053"/>
        <note>ligand shared between dimeric partners</note>
    </ligand>
</feature>
<feature type="binding site" evidence="1">
    <location>
        <begin position="300"/>
        <end position="306"/>
    </location>
    <ligand>
        <name>substrate</name>
    </ligand>
</feature>
<feature type="binding site" description="in other chain" evidence="1">
    <location>
        <position position="304"/>
    </location>
    <ligand>
        <name>IMP</name>
        <dbReference type="ChEBI" id="CHEBI:58053"/>
        <note>ligand shared between dimeric partners</note>
    </ligand>
</feature>
<feature type="binding site" evidence="1">
    <location>
        <position position="306"/>
    </location>
    <ligand>
        <name>GTP</name>
        <dbReference type="ChEBI" id="CHEBI:37565"/>
    </ligand>
</feature>
<feature type="binding site" evidence="1">
    <location>
        <begin position="332"/>
        <end position="334"/>
    </location>
    <ligand>
        <name>GTP</name>
        <dbReference type="ChEBI" id="CHEBI:37565"/>
    </ligand>
</feature>
<feature type="binding site" evidence="1">
    <location>
        <begin position="414"/>
        <end position="416"/>
    </location>
    <ligand>
        <name>GTP</name>
        <dbReference type="ChEBI" id="CHEBI:37565"/>
    </ligand>
</feature>
<organism>
    <name type="scientific">Methylococcus capsulatus (strain ATCC 33009 / NCIMB 11132 / Bath)</name>
    <dbReference type="NCBI Taxonomy" id="243233"/>
    <lineage>
        <taxon>Bacteria</taxon>
        <taxon>Pseudomonadati</taxon>
        <taxon>Pseudomonadota</taxon>
        <taxon>Gammaproteobacteria</taxon>
        <taxon>Methylococcales</taxon>
        <taxon>Methylococcaceae</taxon>
        <taxon>Methylococcus</taxon>
    </lineage>
</organism>
<protein>
    <recommendedName>
        <fullName evidence="1">Adenylosuccinate synthetase</fullName>
        <shortName evidence="1">AMPSase</shortName>
        <shortName evidence="1">AdSS</shortName>
        <ecNumber evidence="1">6.3.4.4</ecNumber>
    </recommendedName>
    <alternativeName>
        <fullName evidence="1">IMP--aspartate ligase</fullName>
    </alternativeName>
</protein>
<sequence length="432" mass="46191">MAKNIVVIGTQWGDEGKGKLVDLLTEHANAVVRFQGGHNAGHTLVIDGRKTVLHLIPSGILRDSVTCLIGNGVVLSPEALMQEIGVLESVGLSIRDRLIVSEACALILPVHIALDNAREAARGGKAIGTTGRGIGPAYEDKVARRGLRAGDLRDTAGLPERLRELLDYHNFMLTRYYGAQGVDFQETLDSLLDLGGKICPMLGDVAGILHRYQSAGENVLFEGAQGAMLDIDHGTYPYVTSSNTTAGGASCGTGVGLLNFDYVLGITKAYATRVGNGPFPTELLDATGEILTQKGAEFGATTGRRRRCGWFDAVLMRRSAKLNGLSGICLTKLDVLDGLPRIGICTGYRYDGQEIDTVPIGADNYARCEPIIEEMPGWQESTAGIRALDDLPANARAYIRRLEETTGVNVDIISTGPDRQDTIVIQNPFAAG</sequence>
<accession>Q606N8</accession>
<name>PURA_METCA</name>
<comment type="function">
    <text evidence="1">Plays an important role in the de novo pathway of purine nucleotide biosynthesis. Catalyzes the first committed step in the biosynthesis of AMP from IMP.</text>
</comment>
<comment type="catalytic activity">
    <reaction evidence="1">
        <text>IMP + L-aspartate + GTP = N(6)-(1,2-dicarboxyethyl)-AMP + GDP + phosphate + 2 H(+)</text>
        <dbReference type="Rhea" id="RHEA:15753"/>
        <dbReference type="ChEBI" id="CHEBI:15378"/>
        <dbReference type="ChEBI" id="CHEBI:29991"/>
        <dbReference type="ChEBI" id="CHEBI:37565"/>
        <dbReference type="ChEBI" id="CHEBI:43474"/>
        <dbReference type="ChEBI" id="CHEBI:57567"/>
        <dbReference type="ChEBI" id="CHEBI:58053"/>
        <dbReference type="ChEBI" id="CHEBI:58189"/>
        <dbReference type="EC" id="6.3.4.4"/>
    </reaction>
</comment>
<comment type="cofactor">
    <cofactor evidence="1">
        <name>Mg(2+)</name>
        <dbReference type="ChEBI" id="CHEBI:18420"/>
    </cofactor>
    <text evidence="1">Binds 1 Mg(2+) ion per subunit.</text>
</comment>
<comment type="pathway">
    <text evidence="1">Purine metabolism; AMP biosynthesis via de novo pathway; AMP from IMP: step 1/2.</text>
</comment>
<comment type="subunit">
    <text evidence="1">Homodimer.</text>
</comment>
<comment type="subcellular location">
    <subcellularLocation>
        <location evidence="1">Cytoplasm</location>
    </subcellularLocation>
</comment>
<comment type="similarity">
    <text evidence="1">Belongs to the adenylosuccinate synthetase family.</text>
</comment>
<keyword id="KW-0963">Cytoplasm</keyword>
<keyword id="KW-0342">GTP-binding</keyword>
<keyword id="KW-0436">Ligase</keyword>
<keyword id="KW-0460">Magnesium</keyword>
<keyword id="KW-0479">Metal-binding</keyword>
<keyword id="KW-0547">Nucleotide-binding</keyword>
<keyword id="KW-0658">Purine biosynthesis</keyword>
<keyword id="KW-1185">Reference proteome</keyword>
<gene>
    <name evidence="1" type="primary">purA</name>
    <name type="ordered locus">MCA1978</name>
</gene>
<dbReference type="EC" id="6.3.4.4" evidence="1"/>
<dbReference type="EMBL" id="AE017282">
    <property type="protein sequence ID" value="AAU91998.1"/>
    <property type="molecule type" value="Genomic_DNA"/>
</dbReference>
<dbReference type="RefSeq" id="WP_010961223.1">
    <property type="nucleotide sequence ID" value="NC_002977.6"/>
</dbReference>
<dbReference type="SMR" id="Q606N8"/>
<dbReference type="STRING" id="243233.MCA1978"/>
<dbReference type="GeneID" id="88224208"/>
<dbReference type="KEGG" id="mca:MCA1978"/>
<dbReference type="eggNOG" id="COG0104">
    <property type="taxonomic scope" value="Bacteria"/>
</dbReference>
<dbReference type="HOGENOM" id="CLU_029848_0_0_6"/>
<dbReference type="UniPathway" id="UPA00075">
    <property type="reaction ID" value="UER00335"/>
</dbReference>
<dbReference type="Proteomes" id="UP000006821">
    <property type="component" value="Chromosome"/>
</dbReference>
<dbReference type="GO" id="GO:0005737">
    <property type="term" value="C:cytoplasm"/>
    <property type="evidence" value="ECO:0007669"/>
    <property type="project" value="UniProtKB-SubCell"/>
</dbReference>
<dbReference type="GO" id="GO:0004019">
    <property type="term" value="F:adenylosuccinate synthase activity"/>
    <property type="evidence" value="ECO:0007669"/>
    <property type="project" value="UniProtKB-UniRule"/>
</dbReference>
<dbReference type="GO" id="GO:0005525">
    <property type="term" value="F:GTP binding"/>
    <property type="evidence" value="ECO:0007669"/>
    <property type="project" value="UniProtKB-UniRule"/>
</dbReference>
<dbReference type="GO" id="GO:0000287">
    <property type="term" value="F:magnesium ion binding"/>
    <property type="evidence" value="ECO:0007669"/>
    <property type="project" value="UniProtKB-UniRule"/>
</dbReference>
<dbReference type="GO" id="GO:0044208">
    <property type="term" value="P:'de novo' AMP biosynthetic process"/>
    <property type="evidence" value="ECO:0007669"/>
    <property type="project" value="UniProtKB-UniRule"/>
</dbReference>
<dbReference type="GO" id="GO:0046040">
    <property type="term" value="P:IMP metabolic process"/>
    <property type="evidence" value="ECO:0007669"/>
    <property type="project" value="TreeGrafter"/>
</dbReference>
<dbReference type="CDD" id="cd03108">
    <property type="entry name" value="AdSS"/>
    <property type="match status" value="1"/>
</dbReference>
<dbReference type="FunFam" id="1.10.300.10:FF:000001">
    <property type="entry name" value="Adenylosuccinate synthetase"/>
    <property type="match status" value="1"/>
</dbReference>
<dbReference type="FunFam" id="3.90.170.10:FF:000001">
    <property type="entry name" value="Adenylosuccinate synthetase"/>
    <property type="match status" value="1"/>
</dbReference>
<dbReference type="Gene3D" id="3.40.440.10">
    <property type="entry name" value="Adenylosuccinate Synthetase, subunit A, domain 1"/>
    <property type="match status" value="1"/>
</dbReference>
<dbReference type="Gene3D" id="1.10.300.10">
    <property type="entry name" value="Adenylosuccinate Synthetase, subunit A, domain 2"/>
    <property type="match status" value="1"/>
</dbReference>
<dbReference type="Gene3D" id="3.90.170.10">
    <property type="entry name" value="Adenylosuccinate Synthetase, subunit A, domain 3"/>
    <property type="match status" value="1"/>
</dbReference>
<dbReference type="HAMAP" id="MF_00011">
    <property type="entry name" value="Adenylosucc_synth"/>
    <property type="match status" value="1"/>
</dbReference>
<dbReference type="InterPro" id="IPR018220">
    <property type="entry name" value="Adenylosuccin_syn_GTP-bd"/>
</dbReference>
<dbReference type="InterPro" id="IPR033128">
    <property type="entry name" value="Adenylosuccin_syn_Lys_AS"/>
</dbReference>
<dbReference type="InterPro" id="IPR042109">
    <property type="entry name" value="Adenylosuccinate_synth_dom1"/>
</dbReference>
<dbReference type="InterPro" id="IPR042110">
    <property type="entry name" value="Adenylosuccinate_synth_dom2"/>
</dbReference>
<dbReference type="InterPro" id="IPR042111">
    <property type="entry name" value="Adenylosuccinate_synth_dom3"/>
</dbReference>
<dbReference type="InterPro" id="IPR001114">
    <property type="entry name" value="Adenylosuccinate_synthetase"/>
</dbReference>
<dbReference type="InterPro" id="IPR027417">
    <property type="entry name" value="P-loop_NTPase"/>
</dbReference>
<dbReference type="NCBIfam" id="NF002223">
    <property type="entry name" value="PRK01117.1"/>
    <property type="match status" value="1"/>
</dbReference>
<dbReference type="NCBIfam" id="TIGR00184">
    <property type="entry name" value="purA"/>
    <property type="match status" value="1"/>
</dbReference>
<dbReference type="PANTHER" id="PTHR11846">
    <property type="entry name" value="ADENYLOSUCCINATE SYNTHETASE"/>
    <property type="match status" value="1"/>
</dbReference>
<dbReference type="PANTHER" id="PTHR11846:SF0">
    <property type="entry name" value="ADENYLOSUCCINATE SYNTHETASE"/>
    <property type="match status" value="1"/>
</dbReference>
<dbReference type="Pfam" id="PF00709">
    <property type="entry name" value="Adenylsucc_synt"/>
    <property type="match status" value="1"/>
</dbReference>
<dbReference type="SMART" id="SM00788">
    <property type="entry name" value="Adenylsucc_synt"/>
    <property type="match status" value="1"/>
</dbReference>
<dbReference type="SUPFAM" id="SSF52540">
    <property type="entry name" value="P-loop containing nucleoside triphosphate hydrolases"/>
    <property type="match status" value="1"/>
</dbReference>
<dbReference type="PROSITE" id="PS01266">
    <property type="entry name" value="ADENYLOSUCCIN_SYN_1"/>
    <property type="match status" value="1"/>
</dbReference>
<dbReference type="PROSITE" id="PS00513">
    <property type="entry name" value="ADENYLOSUCCIN_SYN_2"/>
    <property type="match status" value="1"/>
</dbReference>
<proteinExistence type="inferred from homology"/>